<reference key="1">
    <citation type="journal article" date="2007" name="PLoS Genet.">
        <title>Patterns and implications of gene gain and loss in the evolution of Prochlorococcus.</title>
        <authorList>
            <person name="Kettler G.C."/>
            <person name="Martiny A.C."/>
            <person name="Huang K."/>
            <person name="Zucker J."/>
            <person name="Coleman M.L."/>
            <person name="Rodrigue S."/>
            <person name="Chen F."/>
            <person name="Lapidus A."/>
            <person name="Ferriera S."/>
            <person name="Johnson J."/>
            <person name="Steglich C."/>
            <person name="Church G.M."/>
            <person name="Richardson P."/>
            <person name="Chisholm S.W."/>
        </authorList>
    </citation>
    <scope>NUCLEOTIDE SEQUENCE [LARGE SCALE GENOMIC DNA]</scope>
    <source>
        <strain>NATL1A</strain>
    </source>
</reference>
<organism>
    <name type="scientific">Prochlorococcus marinus (strain NATL1A)</name>
    <dbReference type="NCBI Taxonomy" id="167555"/>
    <lineage>
        <taxon>Bacteria</taxon>
        <taxon>Bacillati</taxon>
        <taxon>Cyanobacteriota</taxon>
        <taxon>Cyanophyceae</taxon>
        <taxon>Synechococcales</taxon>
        <taxon>Prochlorococcaceae</taxon>
        <taxon>Prochlorococcus</taxon>
    </lineage>
</organism>
<keyword id="KW-0143">Chaperone</keyword>
<keyword id="KW-0963">Cytoplasm</keyword>
<keyword id="KW-0996">Nickel insertion</keyword>
<gene>
    <name evidence="1" type="primary">ureD</name>
    <name type="ordered locus">NATL1_19231</name>
</gene>
<name>URED_PROM1</name>
<evidence type="ECO:0000255" key="1">
    <source>
        <dbReference type="HAMAP-Rule" id="MF_01384"/>
    </source>
</evidence>
<feature type="chain" id="PRO_0000346586" description="Urease accessory protein UreD">
    <location>
        <begin position="1"/>
        <end position="307"/>
    </location>
</feature>
<accession>A2C4R9</accession>
<comment type="function">
    <text evidence="1">Required for maturation of urease via the functional incorporation of the urease nickel metallocenter.</text>
</comment>
<comment type="subunit">
    <text evidence="1">UreD, UreF and UreG form a complex that acts as a GTP-hydrolysis-dependent molecular chaperone, activating the urease apoprotein by helping to assemble the nickel containing metallocenter of UreC. The UreE protein probably delivers the nickel.</text>
</comment>
<comment type="subcellular location">
    <subcellularLocation>
        <location evidence="1">Cytoplasm</location>
    </subcellularLocation>
</comment>
<comment type="similarity">
    <text evidence="1">Belongs to the UreD family.</text>
</comment>
<protein>
    <recommendedName>
        <fullName evidence="1">Urease accessory protein UreD</fullName>
    </recommendedName>
</protein>
<sequence length="307" mass="34898">MKSQWHGTCDLRLFKSSRSNNKDVVKTIHQAKCTAPLKVMRVFNDKKDGRCEIPILHSAGGIVGGDQLTINVNAEEDSIAICSSVAAQKVYGSRGRSKLNPQGSWANQKCFFQIKKNSDFEWIPQELIVYQGGLFEQNMTVNLDLSSSFLCVDLVRLGRTAAEEQLGNGVWRSSLEIFRDNNQGKHYEFSDRLELSGEALKSIHGLEQKPVFGSLTWITPKKIKQKDLSDLLVECREQRAGLEGFMTCSLLENGISARYTGSSTQSARFWFYRIWSLTRILRKLSMPEYMRIWPMQENPSRDKKCPS</sequence>
<proteinExistence type="inferred from homology"/>
<dbReference type="EMBL" id="CP000553">
    <property type="protein sequence ID" value="ABM76479.1"/>
    <property type="molecule type" value="Genomic_DNA"/>
</dbReference>
<dbReference type="RefSeq" id="WP_011824455.1">
    <property type="nucleotide sequence ID" value="NC_008819.1"/>
</dbReference>
<dbReference type="SMR" id="A2C4R9"/>
<dbReference type="KEGG" id="pme:NATL1_19231"/>
<dbReference type="eggNOG" id="COG0829">
    <property type="taxonomic scope" value="Bacteria"/>
</dbReference>
<dbReference type="HOGENOM" id="CLU_056339_4_0_3"/>
<dbReference type="Proteomes" id="UP000002592">
    <property type="component" value="Chromosome"/>
</dbReference>
<dbReference type="GO" id="GO:0005737">
    <property type="term" value="C:cytoplasm"/>
    <property type="evidence" value="ECO:0007669"/>
    <property type="project" value="UniProtKB-SubCell"/>
</dbReference>
<dbReference type="GO" id="GO:0016151">
    <property type="term" value="F:nickel cation binding"/>
    <property type="evidence" value="ECO:0007669"/>
    <property type="project" value="UniProtKB-UniRule"/>
</dbReference>
<dbReference type="HAMAP" id="MF_01384">
    <property type="entry name" value="UreD"/>
    <property type="match status" value="1"/>
</dbReference>
<dbReference type="InterPro" id="IPR002669">
    <property type="entry name" value="UreD"/>
</dbReference>
<dbReference type="PANTHER" id="PTHR33643">
    <property type="entry name" value="UREASE ACCESSORY PROTEIN D"/>
    <property type="match status" value="1"/>
</dbReference>
<dbReference type="PANTHER" id="PTHR33643:SF1">
    <property type="entry name" value="UREASE ACCESSORY PROTEIN D"/>
    <property type="match status" value="1"/>
</dbReference>
<dbReference type="Pfam" id="PF01774">
    <property type="entry name" value="UreD"/>
    <property type="match status" value="1"/>
</dbReference>